<organism>
    <name type="scientific">Xenopus laevis</name>
    <name type="common">African clawed frog</name>
    <dbReference type="NCBI Taxonomy" id="8355"/>
    <lineage>
        <taxon>Eukaryota</taxon>
        <taxon>Metazoa</taxon>
        <taxon>Chordata</taxon>
        <taxon>Craniata</taxon>
        <taxon>Vertebrata</taxon>
        <taxon>Euteleostomi</taxon>
        <taxon>Amphibia</taxon>
        <taxon>Batrachia</taxon>
        <taxon>Anura</taxon>
        <taxon>Pipoidea</taxon>
        <taxon>Pipidae</taxon>
        <taxon>Xenopodinae</taxon>
        <taxon>Xenopus</taxon>
        <taxon>Xenopus</taxon>
    </lineage>
</organism>
<sequence length="601" mass="67108">MSFSGEMSNGKTDVTNGGFSSSPEDMSGAEEGKENSSGIEVEASDVSLSLTADETGTTQAESRDSCSETSGEDKDSDSMDDTGHYSINDENRGNDQSHSEDEEEEEEEDEEEEAVRHRKRAQRKRANRDQESSDEERALDDWLISEKTPLPPPQWRALSALRQRQMGSSTRFIYEACGARGFVQRFHLLHGLDGHSGCVNTLHFNQRGTCLASGSDDLKVVVWDWVRRKPVLEFESGHKSNVFQAKFLPNSGDSTLAMCARDGQVRVAELSATHCCKNTKRVAQHKGASHKLALEPDSPCTFLSAGEDAVVFTIDLRQDRPASRLVVTKEKESKVGLYTIYVNPANTYQFAVGGRDQFVRIYDQRKINENVNNGVLKKFCPHHLVTSEAKANITCLVYSHDGSELLASYNDEDIYLFNSSHSDGAEYIKRYKGHRNNATVKGVNFYGPRSEFVVSGSDCGHIFLWEKSSCQIVQFMDGDKGGVVNCLEPHPHLPVLATSGLDYDVKIWLPTAKEPTELDGLKEVIKKNKRERDEDSLHHTDLFDNHMLWFLMHHLRQRGQRRRRRDAGLGAGDAESDDSPSSSDSSDDDEDGPDRVQCIPS</sequence>
<proteinExistence type="evidence at transcript level"/>
<gene>
    <name type="primary">dcaf8</name>
    <name type="synonym">wdr42a</name>
</gene>
<protein>
    <recommendedName>
        <fullName>DDB1- and CUL4-associated factor 8</fullName>
    </recommendedName>
    <alternativeName>
        <fullName>WD repeat-containing protein 42A</fullName>
    </alternativeName>
</protein>
<evidence type="ECO:0000250" key="1">
    <source>
        <dbReference type="UniProtKB" id="Q5TAQ9"/>
    </source>
</evidence>
<evidence type="ECO:0000255" key="2"/>
<evidence type="ECO:0000256" key="3">
    <source>
        <dbReference type="SAM" id="MobiDB-lite"/>
    </source>
</evidence>
<evidence type="ECO:0000305" key="4"/>
<comment type="subcellular location">
    <subcellularLocation>
        <location evidence="1">Nucleus</location>
    </subcellularLocation>
    <subcellularLocation>
        <location evidence="1">Cytoplasm</location>
    </subcellularLocation>
    <text evidence="1">It shuttles between the nucleus and the cytoplasm.</text>
</comment>
<comment type="similarity">
    <text evidence="4">Belongs to the WD repeat DCAF8 family.</text>
</comment>
<name>DCAF8_XENLA</name>
<accession>Q6NRH1</accession>
<reference key="1">
    <citation type="submission" date="2004-05" db="EMBL/GenBank/DDBJ databases">
        <authorList>
            <consortium name="NIH - Xenopus Gene Collection (XGC) project"/>
        </authorList>
    </citation>
    <scope>NUCLEOTIDE SEQUENCE [LARGE SCALE MRNA]</scope>
    <source>
        <tissue>Oocyte</tissue>
    </source>
</reference>
<dbReference type="EMBL" id="BC070779">
    <property type="protein sequence ID" value="AAH70779.1"/>
    <property type="molecule type" value="mRNA"/>
</dbReference>
<dbReference type="RefSeq" id="NP_001084901.1">
    <property type="nucleotide sequence ID" value="NM_001091432.1"/>
</dbReference>
<dbReference type="SMR" id="Q6NRH1"/>
<dbReference type="BioGRID" id="101318">
    <property type="interactions" value="1"/>
</dbReference>
<dbReference type="IntAct" id="Q6NRH1">
    <property type="interactions" value="1"/>
</dbReference>
<dbReference type="DNASU" id="431952"/>
<dbReference type="GeneID" id="431952"/>
<dbReference type="KEGG" id="xla:431952"/>
<dbReference type="AGR" id="Xenbase:XB-GENE-989777"/>
<dbReference type="CTD" id="431952"/>
<dbReference type="Xenbase" id="XB-GENE-989777">
    <property type="gene designation" value="dcaf8.S"/>
</dbReference>
<dbReference type="OrthoDB" id="4869960at2759"/>
<dbReference type="Proteomes" id="UP000186698">
    <property type="component" value="Chromosome 8S"/>
</dbReference>
<dbReference type="Bgee" id="431952">
    <property type="expression patterns" value="Expressed in muscle tissue and 19 other cell types or tissues"/>
</dbReference>
<dbReference type="GO" id="GO:0080008">
    <property type="term" value="C:Cul4-RING E3 ubiquitin ligase complex"/>
    <property type="evidence" value="ECO:0000318"/>
    <property type="project" value="GO_Central"/>
</dbReference>
<dbReference type="GO" id="GO:0005737">
    <property type="term" value="C:cytoplasm"/>
    <property type="evidence" value="ECO:0000318"/>
    <property type="project" value="GO_Central"/>
</dbReference>
<dbReference type="GO" id="GO:0005634">
    <property type="term" value="C:nucleus"/>
    <property type="evidence" value="ECO:0007669"/>
    <property type="project" value="UniProtKB-SubCell"/>
</dbReference>
<dbReference type="FunFam" id="2.130.10.10:FF:000144">
    <property type="entry name" value="DDB1- and CUL4-associated factor 8"/>
    <property type="match status" value="1"/>
</dbReference>
<dbReference type="Gene3D" id="2.130.10.10">
    <property type="entry name" value="YVTN repeat-like/Quinoprotein amine dehydrogenase"/>
    <property type="match status" value="1"/>
</dbReference>
<dbReference type="InterPro" id="IPR045151">
    <property type="entry name" value="DCAF8"/>
</dbReference>
<dbReference type="InterPro" id="IPR015943">
    <property type="entry name" value="WD40/YVTN_repeat-like_dom_sf"/>
</dbReference>
<dbReference type="InterPro" id="IPR036322">
    <property type="entry name" value="WD40_repeat_dom_sf"/>
</dbReference>
<dbReference type="InterPro" id="IPR001680">
    <property type="entry name" value="WD40_rpt"/>
</dbReference>
<dbReference type="PANTHER" id="PTHR15574:SF21">
    <property type="entry name" value="DDB1- AND CUL4-ASSOCIATED FACTOR 8"/>
    <property type="match status" value="1"/>
</dbReference>
<dbReference type="PANTHER" id="PTHR15574">
    <property type="entry name" value="WD REPEAT DOMAIN-CONTAINING FAMILY"/>
    <property type="match status" value="1"/>
</dbReference>
<dbReference type="Pfam" id="PF00400">
    <property type="entry name" value="WD40"/>
    <property type="match status" value="3"/>
</dbReference>
<dbReference type="SMART" id="SM00320">
    <property type="entry name" value="WD40"/>
    <property type="match status" value="7"/>
</dbReference>
<dbReference type="SUPFAM" id="SSF50978">
    <property type="entry name" value="WD40 repeat-like"/>
    <property type="match status" value="1"/>
</dbReference>
<dbReference type="PROSITE" id="PS50082">
    <property type="entry name" value="WD_REPEATS_2"/>
    <property type="match status" value="1"/>
</dbReference>
<dbReference type="PROSITE" id="PS50294">
    <property type="entry name" value="WD_REPEATS_REGION"/>
    <property type="match status" value="1"/>
</dbReference>
<feature type="chain" id="PRO_0000296962" description="DDB1- and CUL4-associated factor 8">
    <location>
        <begin position="1"/>
        <end position="601"/>
    </location>
</feature>
<feature type="repeat" description="WD 1">
    <location>
        <begin position="194"/>
        <end position="233"/>
    </location>
</feature>
<feature type="repeat" description="WD 2">
    <location>
        <begin position="237"/>
        <end position="278"/>
    </location>
</feature>
<feature type="repeat" description="WD 3">
    <location>
        <begin position="284"/>
        <end position="324"/>
    </location>
</feature>
<feature type="repeat" description="WD 4">
    <location>
        <begin position="332"/>
        <end position="372"/>
    </location>
</feature>
<feature type="repeat" description="WD 5">
    <location>
        <begin position="388"/>
        <end position="427"/>
    </location>
</feature>
<feature type="repeat" description="WD 6">
    <location>
        <begin position="435"/>
        <end position="475"/>
    </location>
</feature>
<feature type="repeat" description="WD 7">
    <location>
        <begin position="479"/>
        <end position="519"/>
    </location>
</feature>
<feature type="region of interest" description="Disordered" evidence="3">
    <location>
        <begin position="1"/>
        <end position="150"/>
    </location>
</feature>
<feature type="region of interest" description="Disordered" evidence="3">
    <location>
        <begin position="561"/>
        <end position="601"/>
    </location>
</feature>
<feature type="coiled-coil region" evidence="2">
    <location>
        <begin position="94"/>
        <end position="131"/>
    </location>
</feature>
<feature type="short sequence motif" description="Nuclear export signal" evidence="1">
    <location>
        <begin position="39"/>
        <end position="50"/>
    </location>
</feature>
<feature type="compositionally biased region" description="Polar residues" evidence="3">
    <location>
        <begin position="1"/>
        <end position="24"/>
    </location>
</feature>
<feature type="compositionally biased region" description="Polar residues" evidence="3">
    <location>
        <begin position="46"/>
        <end position="60"/>
    </location>
</feature>
<feature type="compositionally biased region" description="Basic and acidic residues" evidence="3">
    <location>
        <begin position="61"/>
        <end position="99"/>
    </location>
</feature>
<feature type="compositionally biased region" description="Acidic residues" evidence="3">
    <location>
        <begin position="100"/>
        <end position="113"/>
    </location>
</feature>
<feature type="compositionally biased region" description="Basic residues" evidence="3">
    <location>
        <begin position="116"/>
        <end position="126"/>
    </location>
</feature>
<feature type="compositionally biased region" description="Basic and acidic residues" evidence="3">
    <location>
        <begin position="127"/>
        <end position="140"/>
    </location>
</feature>
<keyword id="KW-0175">Coiled coil</keyword>
<keyword id="KW-0963">Cytoplasm</keyword>
<keyword id="KW-0539">Nucleus</keyword>
<keyword id="KW-1185">Reference proteome</keyword>
<keyword id="KW-0677">Repeat</keyword>
<keyword id="KW-0853">WD repeat</keyword>